<protein>
    <recommendedName>
        <fullName evidence="1">5-deoxyribose 1-phosphate isomerase</fullName>
        <ecNumber evidence="1">5.3.1.-</ecNumber>
    </recommendedName>
</protein>
<organism>
    <name type="scientific">Clostridium botulinum (strain Langeland / NCTC 10281 / Type F)</name>
    <dbReference type="NCBI Taxonomy" id="441772"/>
    <lineage>
        <taxon>Bacteria</taxon>
        <taxon>Bacillati</taxon>
        <taxon>Bacillota</taxon>
        <taxon>Clostridia</taxon>
        <taxon>Eubacteriales</taxon>
        <taxon>Clostridiaceae</taxon>
        <taxon>Clostridium</taxon>
    </lineage>
</organism>
<evidence type="ECO:0000255" key="1">
    <source>
        <dbReference type="HAMAP-Rule" id="MF_02229"/>
    </source>
</evidence>
<gene>
    <name evidence="1" type="primary">drdI</name>
    <name type="ordered locus">CLI_1353</name>
</gene>
<keyword id="KW-0119">Carbohydrate metabolism</keyword>
<keyword id="KW-0413">Isomerase</keyword>
<reference key="1">
    <citation type="submission" date="2007-06" db="EMBL/GenBank/DDBJ databases">
        <authorList>
            <person name="Brinkac L.M."/>
            <person name="Daugherty S."/>
            <person name="Dodson R.J."/>
            <person name="Madupu R."/>
            <person name="Brown J.L."/>
            <person name="Bruce D."/>
            <person name="Detter C."/>
            <person name="Munk C."/>
            <person name="Smith L.A."/>
            <person name="Smith T.J."/>
            <person name="White O."/>
            <person name="Brettin T.S."/>
        </authorList>
    </citation>
    <scope>NUCLEOTIDE SEQUENCE [LARGE SCALE GENOMIC DNA]</scope>
    <source>
        <strain>Langeland / NCTC 10281 / Type F</strain>
    </source>
</reference>
<dbReference type="EC" id="5.3.1.-" evidence="1"/>
<dbReference type="EMBL" id="CP000728">
    <property type="protein sequence ID" value="ABS42520.1"/>
    <property type="molecule type" value="Genomic_DNA"/>
</dbReference>
<dbReference type="RefSeq" id="WP_011988125.1">
    <property type="nucleotide sequence ID" value="NC_009699.1"/>
</dbReference>
<dbReference type="SMR" id="A7GCV8"/>
<dbReference type="KEGG" id="cbf:CLI_1353"/>
<dbReference type="HOGENOM" id="CLU_016218_1_2_9"/>
<dbReference type="Proteomes" id="UP000002410">
    <property type="component" value="Chromosome"/>
</dbReference>
<dbReference type="GO" id="GO:0046523">
    <property type="term" value="F:S-methyl-5-thioribose-1-phosphate isomerase activity"/>
    <property type="evidence" value="ECO:0007669"/>
    <property type="project" value="InterPro"/>
</dbReference>
<dbReference type="GO" id="GO:0019509">
    <property type="term" value="P:L-methionine salvage from methylthioadenosine"/>
    <property type="evidence" value="ECO:0007669"/>
    <property type="project" value="TreeGrafter"/>
</dbReference>
<dbReference type="GO" id="GO:0019323">
    <property type="term" value="P:pentose catabolic process"/>
    <property type="evidence" value="ECO:0007669"/>
    <property type="project" value="UniProtKB-UniRule"/>
</dbReference>
<dbReference type="FunFam" id="1.20.120.420:FF:000001">
    <property type="entry name" value="Methylthioribose-1-phosphate isomerase"/>
    <property type="match status" value="1"/>
</dbReference>
<dbReference type="FunFam" id="3.40.50.10470:FF:000006">
    <property type="entry name" value="Methylthioribose-1-phosphate isomerase"/>
    <property type="match status" value="1"/>
</dbReference>
<dbReference type="Gene3D" id="1.20.120.420">
    <property type="entry name" value="translation initiation factor eif-2b, domain 1"/>
    <property type="match status" value="1"/>
</dbReference>
<dbReference type="Gene3D" id="3.40.50.10470">
    <property type="entry name" value="Translation initiation factor eif-2b, domain 2"/>
    <property type="match status" value="1"/>
</dbReference>
<dbReference type="HAMAP" id="MF_02229">
    <property type="entry name" value="Deoxyribose1P_isomerase"/>
    <property type="match status" value="1"/>
</dbReference>
<dbReference type="HAMAP" id="MF_01678">
    <property type="entry name" value="Salvage_MtnA"/>
    <property type="match status" value="1"/>
</dbReference>
<dbReference type="InterPro" id="IPR043679">
    <property type="entry name" value="Deoxyribose1P_isomerase_DrdI"/>
</dbReference>
<dbReference type="InterPro" id="IPR000649">
    <property type="entry name" value="IF-2B-related"/>
</dbReference>
<dbReference type="InterPro" id="IPR005251">
    <property type="entry name" value="IF-M1Pi"/>
</dbReference>
<dbReference type="InterPro" id="IPR042529">
    <property type="entry name" value="IF_2B-like_C"/>
</dbReference>
<dbReference type="InterPro" id="IPR011559">
    <property type="entry name" value="Initiation_fac_2B_a/b/d"/>
</dbReference>
<dbReference type="InterPro" id="IPR027363">
    <property type="entry name" value="M1Pi_N"/>
</dbReference>
<dbReference type="InterPro" id="IPR037171">
    <property type="entry name" value="NagB/RpiA_transferase-like"/>
</dbReference>
<dbReference type="NCBIfam" id="TIGR00524">
    <property type="entry name" value="eIF-2B_rel"/>
    <property type="match status" value="1"/>
</dbReference>
<dbReference type="NCBIfam" id="NF004326">
    <property type="entry name" value="PRK05720.1"/>
    <property type="match status" value="1"/>
</dbReference>
<dbReference type="NCBIfam" id="TIGR00512">
    <property type="entry name" value="salvage_mtnA"/>
    <property type="match status" value="1"/>
</dbReference>
<dbReference type="PANTHER" id="PTHR43475">
    <property type="entry name" value="METHYLTHIORIBOSE-1-PHOSPHATE ISOMERASE"/>
    <property type="match status" value="1"/>
</dbReference>
<dbReference type="PANTHER" id="PTHR43475:SF1">
    <property type="entry name" value="METHYLTHIORIBOSE-1-PHOSPHATE ISOMERASE"/>
    <property type="match status" value="1"/>
</dbReference>
<dbReference type="Pfam" id="PF01008">
    <property type="entry name" value="IF-2B"/>
    <property type="match status" value="1"/>
</dbReference>
<dbReference type="SUPFAM" id="SSF100950">
    <property type="entry name" value="NagB/RpiA/CoA transferase-like"/>
    <property type="match status" value="1"/>
</dbReference>
<sequence length="349" mass="38643">MAELLAIKWDDNRDKLILLDQTILPNKIEYIEYDTAEGVYDSIKDMIVRGAPAIGVTAAYGLYFAAKVAPEDKFEGFFKYLKEKSAYLDSSRPTAVNLSWALKVMESKALENKDKDVKEIKSILREEAKRIHEEDIEICKTIGENLITLLKDGVGILTHCNAGQLATSKYGTATSPMYLAKEKGWNFKVYSDETRPRLQGSTLTALELYEAGIDVTTITDNMAAMVMSQGKIDAVIVGCDRIAANGDTANKIGTMGVSILAKYFGIPMYIAAPTPSIDINTKTGEDIPIEERNSEEVTSRFGVWTAPKGVKVYNPGFDVTPHENITAIVTEKGIVYPPFKENLKKLFEK</sequence>
<comment type="function">
    <text evidence="1">Catalyzes the isomerization of 5-deoxy-alpha-D-ribose 1-phosphate to 5-deoxy-D-ribulose 1-phosphate, as part of a 5-deoxyribose salvage pathway that recycles this toxic radical SAM enzyme by-product to mainstream metabolites.</text>
</comment>
<comment type="catalytic activity">
    <reaction evidence="1">
        <text>5-deoxy-alpha-D-ribose 1-phosphate = 5-deoxy-D-ribulose 1-phosphate</text>
        <dbReference type="Rhea" id="RHEA:61296"/>
        <dbReference type="ChEBI" id="CHEBI:58749"/>
        <dbReference type="ChEBI" id="CHEBI:144504"/>
    </reaction>
    <physiologicalReaction direction="left-to-right" evidence="1">
        <dbReference type="Rhea" id="RHEA:61297"/>
    </physiologicalReaction>
</comment>
<comment type="pathway">
    <text evidence="1">Carbohydrate degradation.</text>
</comment>
<comment type="similarity">
    <text evidence="1">Belongs to the EIF-2B alpha/beta/delta subunits family. DrdI subfamily.</text>
</comment>
<proteinExistence type="inferred from homology"/>
<name>DRDI_CLOBL</name>
<accession>A7GCV8</accession>
<feature type="chain" id="PRO_0000357164" description="5-deoxyribose 1-phosphate isomerase">
    <location>
        <begin position="1"/>
        <end position="349"/>
    </location>
</feature>
<feature type="active site" description="Proton donor" evidence="1">
    <location>
        <position position="240"/>
    </location>
</feature>
<feature type="binding site" evidence="1">
    <location>
        <begin position="49"/>
        <end position="51"/>
    </location>
    <ligand>
        <name>substrate</name>
    </ligand>
</feature>
<feature type="binding site" evidence="1">
    <location>
        <position position="92"/>
    </location>
    <ligand>
        <name>substrate</name>
    </ligand>
</feature>
<feature type="binding site" evidence="1">
    <location>
        <position position="199"/>
    </location>
    <ligand>
        <name>substrate</name>
    </ligand>
</feature>
<feature type="binding site" evidence="1">
    <location>
        <begin position="250"/>
        <end position="251"/>
    </location>
    <ligand>
        <name>substrate</name>
    </ligand>
</feature>
<feature type="site" description="Transition state stabilizer" evidence="1">
    <location>
        <position position="160"/>
    </location>
</feature>